<protein>
    <recommendedName>
        <fullName>UPF0758 protein SRU_2338</fullName>
    </recommendedName>
</protein>
<sequence length="233" mass="25206">MYRVPIHEWDESDQPREKLLTHGPTVLSDAEVLALLLGSGTRTSDGPVSAVELGRALLQSYGSLHEVSQRKPKELTRTRGVGPAKATKLAAAFEAGRRVESQRQQDERMQVTCPADVADVYGPLLRDLDKEVFKVVHLNTANVIIGDYTVSEGGLSSSVVEPRGVFEQAILDDAAAVICLHNHPSGNPEPSREDIRITRQLAEAGGTMGIPVHDHLIIAGTKHTSLAERGVID</sequence>
<organism>
    <name type="scientific">Salinibacter ruber (strain DSM 13855 / M31)</name>
    <dbReference type="NCBI Taxonomy" id="309807"/>
    <lineage>
        <taxon>Bacteria</taxon>
        <taxon>Pseudomonadati</taxon>
        <taxon>Rhodothermota</taxon>
        <taxon>Rhodothermia</taxon>
        <taxon>Rhodothermales</taxon>
        <taxon>Salinibacteraceae</taxon>
        <taxon>Salinibacter</taxon>
    </lineage>
</organism>
<dbReference type="EMBL" id="CP000159">
    <property type="protein sequence ID" value="ABC44297.1"/>
    <property type="molecule type" value="Genomic_DNA"/>
</dbReference>
<dbReference type="RefSeq" id="YP_446439.1">
    <property type="nucleotide sequence ID" value="NC_007677.1"/>
</dbReference>
<dbReference type="SMR" id="Q2S042"/>
<dbReference type="STRING" id="309807.SRU_2338"/>
<dbReference type="EnsemblBacteria" id="ABC44297">
    <property type="protein sequence ID" value="ABC44297"/>
    <property type="gene ID" value="SRU_2338"/>
</dbReference>
<dbReference type="KEGG" id="sru:SRU_2338"/>
<dbReference type="PATRIC" id="fig|309807.25.peg.2435"/>
<dbReference type="eggNOG" id="COG2003">
    <property type="taxonomic scope" value="Bacteria"/>
</dbReference>
<dbReference type="HOGENOM" id="CLU_073529_0_2_10"/>
<dbReference type="OrthoDB" id="9804482at2"/>
<dbReference type="Proteomes" id="UP000008674">
    <property type="component" value="Chromosome"/>
</dbReference>
<dbReference type="GO" id="GO:0046872">
    <property type="term" value="F:metal ion binding"/>
    <property type="evidence" value="ECO:0007669"/>
    <property type="project" value="UniProtKB-KW"/>
</dbReference>
<dbReference type="GO" id="GO:0008237">
    <property type="term" value="F:metallopeptidase activity"/>
    <property type="evidence" value="ECO:0007669"/>
    <property type="project" value="UniProtKB-KW"/>
</dbReference>
<dbReference type="GO" id="GO:0006508">
    <property type="term" value="P:proteolysis"/>
    <property type="evidence" value="ECO:0007669"/>
    <property type="project" value="UniProtKB-KW"/>
</dbReference>
<dbReference type="CDD" id="cd08071">
    <property type="entry name" value="MPN_DUF2466"/>
    <property type="match status" value="1"/>
</dbReference>
<dbReference type="Gene3D" id="1.10.150.20">
    <property type="entry name" value="5' to 3' exonuclease, C-terminal subdomain"/>
    <property type="match status" value="1"/>
</dbReference>
<dbReference type="Gene3D" id="3.40.140.10">
    <property type="entry name" value="Cytidine Deaminase, domain 2"/>
    <property type="match status" value="1"/>
</dbReference>
<dbReference type="InterPro" id="IPR037518">
    <property type="entry name" value="MPN"/>
</dbReference>
<dbReference type="InterPro" id="IPR025657">
    <property type="entry name" value="RadC_JAB"/>
</dbReference>
<dbReference type="InterPro" id="IPR010994">
    <property type="entry name" value="RuvA_2-like"/>
</dbReference>
<dbReference type="InterPro" id="IPR001405">
    <property type="entry name" value="UPF0758"/>
</dbReference>
<dbReference type="InterPro" id="IPR020891">
    <property type="entry name" value="UPF0758_CS"/>
</dbReference>
<dbReference type="InterPro" id="IPR046778">
    <property type="entry name" value="UPF0758_N"/>
</dbReference>
<dbReference type="NCBIfam" id="NF000642">
    <property type="entry name" value="PRK00024.1"/>
    <property type="match status" value="1"/>
</dbReference>
<dbReference type="NCBIfam" id="TIGR00608">
    <property type="entry name" value="radc"/>
    <property type="match status" value="1"/>
</dbReference>
<dbReference type="PANTHER" id="PTHR30471">
    <property type="entry name" value="DNA REPAIR PROTEIN RADC"/>
    <property type="match status" value="1"/>
</dbReference>
<dbReference type="PANTHER" id="PTHR30471:SF3">
    <property type="entry name" value="UPF0758 PROTEIN YEES-RELATED"/>
    <property type="match status" value="1"/>
</dbReference>
<dbReference type="Pfam" id="PF04002">
    <property type="entry name" value="RadC"/>
    <property type="match status" value="1"/>
</dbReference>
<dbReference type="Pfam" id="PF20582">
    <property type="entry name" value="UPF0758_N"/>
    <property type="match status" value="1"/>
</dbReference>
<dbReference type="SUPFAM" id="SSF47781">
    <property type="entry name" value="RuvA domain 2-like"/>
    <property type="match status" value="1"/>
</dbReference>
<dbReference type="PROSITE" id="PS50249">
    <property type="entry name" value="MPN"/>
    <property type="match status" value="1"/>
</dbReference>
<dbReference type="PROSITE" id="PS01302">
    <property type="entry name" value="UPF0758"/>
    <property type="match status" value="1"/>
</dbReference>
<proteinExistence type="inferred from homology"/>
<comment type="similarity">
    <text evidence="2">Belongs to the UPF0758 family.</text>
</comment>
<name>Y2338_SALRD</name>
<keyword id="KW-0378">Hydrolase</keyword>
<keyword id="KW-0479">Metal-binding</keyword>
<keyword id="KW-0482">Metalloprotease</keyword>
<keyword id="KW-0645">Protease</keyword>
<keyword id="KW-1185">Reference proteome</keyword>
<keyword id="KW-0862">Zinc</keyword>
<accession>Q2S042</accession>
<feature type="chain" id="PRO_1000089844" description="UPF0758 protein SRU_2338">
    <location>
        <begin position="1"/>
        <end position="233"/>
    </location>
</feature>
<feature type="domain" description="MPN" evidence="1">
    <location>
        <begin position="110"/>
        <end position="232"/>
    </location>
</feature>
<feature type="short sequence motif" description="JAMM motif" evidence="1">
    <location>
        <begin position="181"/>
        <end position="194"/>
    </location>
</feature>
<feature type="binding site" evidence="1">
    <location>
        <position position="181"/>
    </location>
    <ligand>
        <name>Zn(2+)</name>
        <dbReference type="ChEBI" id="CHEBI:29105"/>
        <note>catalytic</note>
    </ligand>
</feature>
<feature type="binding site" evidence="1">
    <location>
        <position position="183"/>
    </location>
    <ligand>
        <name>Zn(2+)</name>
        <dbReference type="ChEBI" id="CHEBI:29105"/>
        <note>catalytic</note>
    </ligand>
</feature>
<feature type="binding site" evidence="1">
    <location>
        <position position="194"/>
    </location>
    <ligand>
        <name>Zn(2+)</name>
        <dbReference type="ChEBI" id="CHEBI:29105"/>
        <note>catalytic</note>
    </ligand>
</feature>
<reference key="1">
    <citation type="journal article" date="2005" name="Proc. Natl. Acad. Sci. U.S.A.">
        <title>The genome of Salinibacter ruber: convergence and gene exchange among hyperhalophilic bacteria and archaea.</title>
        <authorList>
            <person name="Mongodin E.F."/>
            <person name="Nelson K.E."/>
            <person name="Daugherty S."/>
            <person name="DeBoy R.T."/>
            <person name="Wister J."/>
            <person name="Khouri H."/>
            <person name="Weidman J."/>
            <person name="Walsh D.A."/>
            <person name="Papke R.T."/>
            <person name="Sanchez Perez G."/>
            <person name="Sharma A.K."/>
            <person name="Nesbo C.L."/>
            <person name="MacLeod D."/>
            <person name="Bapteste E."/>
            <person name="Doolittle W.F."/>
            <person name="Charlebois R.L."/>
            <person name="Legault B."/>
            <person name="Rodriguez-Valera F."/>
        </authorList>
    </citation>
    <scope>NUCLEOTIDE SEQUENCE [LARGE SCALE GENOMIC DNA]</scope>
    <source>
        <strain>DSM 13855 / CECT 5946 / M31</strain>
    </source>
</reference>
<evidence type="ECO:0000255" key="1">
    <source>
        <dbReference type="PROSITE-ProRule" id="PRU01182"/>
    </source>
</evidence>
<evidence type="ECO:0000305" key="2"/>
<gene>
    <name type="ordered locus">SRU_2338</name>
</gene>